<gene>
    <name type="ORF">ISCW022186</name>
</gene>
<name>NNRE_IXOSC</name>
<comment type="function">
    <text evidence="1">Catalyzes the epimerization of the S- and R-forms of NAD(P)HX, a damaged form of NAD(P)H that is a result of enzymatic or heat-dependent hydration. This is a prerequisite for the S-specific NAD(P)H-hydrate dehydratase to allow the repair of both epimers of NAD(P)HX.</text>
</comment>
<comment type="catalytic activity">
    <reaction>
        <text>(6R)-NADHX = (6S)-NADHX</text>
        <dbReference type="Rhea" id="RHEA:32215"/>
        <dbReference type="ChEBI" id="CHEBI:64074"/>
        <dbReference type="ChEBI" id="CHEBI:64075"/>
        <dbReference type="EC" id="5.1.99.6"/>
    </reaction>
</comment>
<comment type="catalytic activity">
    <reaction>
        <text>(6R)-NADPHX = (6S)-NADPHX</text>
        <dbReference type="Rhea" id="RHEA:32227"/>
        <dbReference type="ChEBI" id="CHEBI:64076"/>
        <dbReference type="ChEBI" id="CHEBI:64077"/>
        <dbReference type="EC" id="5.1.99.6"/>
    </reaction>
</comment>
<comment type="cofactor">
    <cofactor evidence="1">
        <name>K(+)</name>
        <dbReference type="ChEBI" id="CHEBI:29103"/>
    </cofactor>
    <text evidence="1">Binds 1 potassium ion per subunit.</text>
</comment>
<comment type="similarity">
    <text evidence="1">Belongs to the NnrE/AIBP family.</text>
</comment>
<reference key="1">
    <citation type="submission" date="2008-03" db="EMBL/GenBank/DDBJ databases">
        <title>Annotation of Ixodes scapularis.</title>
        <authorList>
            <consortium name="Ixodes scapularis Genome Project Consortium"/>
            <person name="Caler E."/>
            <person name="Hannick L.I."/>
            <person name="Bidwell S."/>
            <person name="Joardar V."/>
            <person name="Thiagarajan M."/>
            <person name="Amedeo P."/>
            <person name="Galinsky K.J."/>
            <person name="Schobel S."/>
            <person name="Inman J."/>
            <person name="Hostetler J."/>
            <person name="Miller J."/>
            <person name="Hammond M."/>
            <person name="Megy K."/>
            <person name="Lawson D."/>
            <person name="Kodira C."/>
            <person name="Sutton G."/>
            <person name="Meyer J."/>
            <person name="Hill C.A."/>
            <person name="Birren B."/>
            <person name="Nene V."/>
            <person name="Collins F."/>
            <person name="Alarcon-Chaidez F."/>
            <person name="Wikel S."/>
            <person name="Strausberg R."/>
        </authorList>
    </citation>
    <scope>NUCLEOTIDE SEQUENCE [LARGE SCALE GENOMIC DNA]</scope>
    <source>
        <strain>Wikel</strain>
    </source>
</reference>
<feature type="chain" id="PRO_0000416319" description="NAD(P)H-hydrate epimerase">
    <location>
        <begin position="1"/>
        <end position="275"/>
    </location>
</feature>
<feature type="domain" description="YjeF N-terminal" evidence="1">
    <location>
        <begin position="49"/>
        <end position="258"/>
    </location>
</feature>
<feature type="binding site" evidence="1">
    <location>
        <begin position="102"/>
        <end position="106"/>
    </location>
    <ligand>
        <name>(6S)-NADPHX</name>
        <dbReference type="ChEBI" id="CHEBI:64076"/>
    </ligand>
</feature>
<feature type="binding site" evidence="1">
    <location>
        <position position="103"/>
    </location>
    <ligand>
        <name>K(+)</name>
        <dbReference type="ChEBI" id="CHEBI:29103"/>
    </ligand>
</feature>
<feature type="binding site" evidence="1">
    <location>
        <position position="167"/>
    </location>
    <ligand>
        <name>K(+)</name>
        <dbReference type="ChEBI" id="CHEBI:29103"/>
    </ligand>
</feature>
<feature type="binding site" evidence="1">
    <location>
        <begin position="171"/>
        <end position="177"/>
    </location>
    <ligand>
        <name>(6S)-NADPHX</name>
        <dbReference type="ChEBI" id="CHEBI:64076"/>
    </ligand>
</feature>
<feature type="binding site" evidence="1">
    <location>
        <position position="200"/>
    </location>
    <ligand>
        <name>(6S)-NADPHX</name>
        <dbReference type="ChEBI" id="CHEBI:64076"/>
    </ligand>
</feature>
<feature type="binding site" evidence="1">
    <location>
        <position position="203"/>
    </location>
    <ligand>
        <name>K(+)</name>
        <dbReference type="ChEBI" id="CHEBI:29103"/>
    </ligand>
</feature>
<keyword id="KW-0413">Isomerase</keyword>
<keyword id="KW-0479">Metal-binding</keyword>
<keyword id="KW-0520">NAD</keyword>
<keyword id="KW-0521">NADP</keyword>
<keyword id="KW-0547">Nucleotide-binding</keyword>
<keyword id="KW-0630">Potassium</keyword>
<keyword id="KW-1185">Reference proteome</keyword>
<organism>
    <name type="scientific">Ixodes scapularis</name>
    <name type="common">Black-legged tick</name>
    <name type="synonym">Deer tick</name>
    <dbReference type="NCBI Taxonomy" id="6945"/>
    <lineage>
        <taxon>Eukaryota</taxon>
        <taxon>Metazoa</taxon>
        <taxon>Ecdysozoa</taxon>
        <taxon>Arthropoda</taxon>
        <taxon>Chelicerata</taxon>
        <taxon>Arachnida</taxon>
        <taxon>Acari</taxon>
        <taxon>Parasitiformes</taxon>
        <taxon>Ixodida</taxon>
        <taxon>Ixodoidea</taxon>
        <taxon>Ixodidae</taxon>
        <taxon>Ixodinae</taxon>
        <taxon>Ixodes</taxon>
    </lineage>
</organism>
<protein>
    <recommendedName>
        <fullName evidence="1">NAD(P)H-hydrate epimerase</fullName>
        <ecNumber>5.1.99.6</ecNumber>
    </recommendedName>
    <alternativeName>
        <fullName evidence="1">NAD(P)HX epimerase</fullName>
    </alternativeName>
</protein>
<proteinExistence type="inferred from homology"/>
<accession>B7QDG3</accession>
<sequence>MEKSEKKPMRFSFRRRPKSVSVDRSEAHAADVSIGQYLEKLNYVSQEEAIKIDQELFSEYAYSVDQLMELAGLSVATAVAKSYPRGPMPKGGTVLVCCGPGNNGGDGLVCARHLKLFGYEPSVFYPKQSNKPLFQNLTKQCQEMEVPFLSFLPDSQLVSDSYNLVVDALFGFSFKPPVRPEFNDVMDKLKKVKIPVVSIDIPSGWDVETGGDADSLQPECLVSLTAPKRCSRNFKGRFHWLGGRFVPPALAAKYELNLPPYPGTDCCLLLTPPPS</sequence>
<evidence type="ECO:0000255" key="1">
    <source>
        <dbReference type="HAMAP-Rule" id="MF_03159"/>
    </source>
</evidence>
<dbReference type="EC" id="5.1.99.6"/>
<dbReference type="EMBL" id="DS913224">
    <property type="protein sequence ID" value="EEC16885.1"/>
    <property type="molecule type" value="Genomic_DNA"/>
</dbReference>
<dbReference type="RefSeq" id="XP_002413577.1">
    <property type="nucleotide sequence ID" value="XM_002413532.1"/>
</dbReference>
<dbReference type="SMR" id="B7QDG3"/>
<dbReference type="FunCoup" id="B7QDG3">
    <property type="interactions" value="1118"/>
</dbReference>
<dbReference type="STRING" id="6945.B7QDG3"/>
<dbReference type="PaxDb" id="6945-B7QDG3"/>
<dbReference type="EnsemblMetazoa" id="ISCW022186-RA">
    <property type="protein sequence ID" value="ISCW022186-PA"/>
    <property type="gene ID" value="ISCW022186"/>
</dbReference>
<dbReference type="KEGG" id="isc:8039603"/>
<dbReference type="VEuPathDB" id="VectorBase:ISCI022186"/>
<dbReference type="VEuPathDB" id="VectorBase:ISCP_015364"/>
<dbReference type="VEuPathDB" id="VectorBase:ISCW022186"/>
<dbReference type="HOGENOM" id="CLU_024853_3_0_1"/>
<dbReference type="InParanoid" id="B7QDG3"/>
<dbReference type="OrthoDB" id="10064708at2759"/>
<dbReference type="PhylomeDB" id="B7QDG3"/>
<dbReference type="Proteomes" id="UP000001555">
    <property type="component" value="Unassembled WGS sequence"/>
</dbReference>
<dbReference type="GO" id="GO:0005739">
    <property type="term" value="C:mitochondrion"/>
    <property type="evidence" value="ECO:0000318"/>
    <property type="project" value="GO_Central"/>
</dbReference>
<dbReference type="GO" id="GO:0046872">
    <property type="term" value="F:metal ion binding"/>
    <property type="evidence" value="ECO:0007669"/>
    <property type="project" value="UniProtKB-KW"/>
</dbReference>
<dbReference type="GO" id="GO:0052856">
    <property type="term" value="F:NAD(P)HX epimerase activity"/>
    <property type="evidence" value="ECO:0000318"/>
    <property type="project" value="GO_Central"/>
</dbReference>
<dbReference type="GO" id="GO:0000166">
    <property type="term" value="F:nucleotide binding"/>
    <property type="evidence" value="ECO:0007669"/>
    <property type="project" value="UniProtKB-KW"/>
</dbReference>
<dbReference type="FunFam" id="3.40.50.10260:FF:000002">
    <property type="entry name" value="NAD(P)H-hydrate epimerase"/>
    <property type="match status" value="1"/>
</dbReference>
<dbReference type="Gene3D" id="3.40.50.10260">
    <property type="entry name" value="YjeF N-terminal domain"/>
    <property type="match status" value="1"/>
</dbReference>
<dbReference type="HAMAP" id="MF_01966">
    <property type="entry name" value="NADHX_epimerase"/>
    <property type="match status" value="1"/>
</dbReference>
<dbReference type="InterPro" id="IPR004443">
    <property type="entry name" value="YjeF_N_dom"/>
</dbReference>
<dbReference type="InterPro" id="IPR036652">
    <property type="entry name" value="YjeF_N_dom_sf"/>
</dbReference>
<dbReference type="InterPro" id="IPR032976">
    <property type="entry name" value="YJEFN_prot_NAXE-like"/>
</dbReference>
<dbReference type="NCBIfam" id="TIGR00197">
    <property type="entry name" value="yjeF_nterm"/>
    <property type="match status" value="1"/>
</dbReference>
<dbReference type="PANTHER" id="PTHR13232">
    <property type="entry name" value="NAD(P)H-HYDRATE EPIMERASE"/>
    <property type="match status" value="1"/>
</dbReference>
<dbReference type="PANTHER" id="PTHR13232:SF10">
    <property type="entry name" value="NAD(P)H-HYDRATE EPIMERASE"/>
    <property type="match status" value="1"/>
</dbReference>
<dbReference type="Pfam" id="PF03853">
    <property type="entry name" value="YjeF_N"/>
    <property type="match status" value="1"/>
</dbReference>
<dbReference type="SUPFAM" id="SSF64153">
    <property type="entry name" value="YjeF N-terminal domain-like"/>
    <property type="match status" value="1"/>
</dbReference>
<dbReference type="PROSITE" id="PS51385">
    <property type="entry name" value="YJEF_N"/>
    <property type="match status" value="1"/>
</dbReference>